<name>BL1S2_CAEEL</name>
<keyword id="KW-1185">Reference proteome</keyword>
<reference key="1">
    <citation type="journal article" date="1998" name="Science">
        <title>Genome sequence of the nematode C. elegans: a platform for investigating biology.</title>
        <authorList>
            <consortium name="The C. elegans sequencing consortium"/>
        </authorList>
    </citation>
    <scope>NUCLEOTIDE SEQUENCE [LARGE SCALE GENOMIC DNA]</scope>
    <source>
        <strain>Bristol N2</strain>
    </source>
</reference>
<reference key="2">
    <citation type="journal article" date="2012" name="PLoS ONE">
        <title>C. elegans BLOC-1 Functions in Trafficking to Lysosome-Related Gut Granules.</title>
        <authorList>
            <person name="Hermann G.J."/>
            <person name="Scavarda E."/>
            <person name="Weis A.M."/>
            <person name="Saxton D.S."/>
            <person name="Thomas L.L."/>
            <person name="Salesky R."/>
            <person name="Somhegyi H."/>
            <person name="Curtin T.P."/>
            <person name="Barrett A."/>
            <person name="Foster O.K."/>
            <person name="Vine A."/>
            <person name="Erlich K."/>
            <person name="Kwan E."/>
            <person name="Rabbitts B.M."/>
            <person name="Warren K."/>
        </authorList>
    </citation>
    <scope>IDENTIFICATION IN THE BLOC-1 COMPLEX</scope>
    <scope>FUNCTION</scope>
</reference>
<organism>
    <name type="scientific">Caenorhabditis elegans</name>
    <dbReference type="NCBI Taxonomy" id="6239"/>
    <lineage>
        <taxon>Eukaryota</taxon>
        <taxon>Metazoa</taxon>
        <taxon>Ecdysozoa</taxon>
        <taxon>Nematoda</taxon>
        <taxon>Chromadorea</taxon>
        <taxon>Rhabditida</taxon>
        <taxon>Rhabditina</taxon>
        <taxon>Rhabditomorpha</taxon>
        <taxon>Rhabditoidea</taxon>
        <taxon>Rhabditidae</taxon>
        <taxon>Peloderinae</taxon>
        <taxon>Caenorhabditis</taxon>
    </lineage>
</organism>
<proteinExistence type="evidence at protein level"/>
<gene>
    <name type="primary">blos-2</name>
    <name type="ORF">Y73B6BL.30</name>
</gene>
<sequence>MAEINERASTSSPPVPSTPAPVPHIRQLADNMTDKVGQFFQHQLEGSIEEYKLLETMNNTTAQRYVDMKVVAEKVAGKLDNLNQKYENLRPYLSQIDAMDESTRRLEEATAVLENYVTQLESKLTNIQQQSQ</sequence>
<protein>
    <recommendedName>
        <fullName>Biogenesis of lysosome-related organelles complex 1 subunit 2</fullName>
        <shortName>BLOC-1 subunit 2</shortName>
    </recommendedName>
</protein>
<dbReference type="EMBL" id="FO081731">
    <property type="protein sequence ID" value="CCD74176.1"/>
    <property type="molecule type" value="Genomic_DNA"/>
</dbReference>
<dbReference type="RefSeq" id="NP_500967.1">
    <property type="nucleotide sequence ID" value="NM_068566.6"/>
</dbReference>
<dbReference type="EMDB" id="EMD-62312"/>
<dbReference type="SMR" id="Q95XD3"/>
<dbReference type="BioGRID" id="42516">
    <property type="interactions" value="1"/>
</dbReference>
<dbReference type="ComplexPortal" id="CPX-479">
    <property type="entry name" value="Bloc-1 complex"/>
</dbReference>
<dbReference type="FunCoup" id="Q95XD3">
    <property type="interactions" value="1050"/>
</dbReference>
<dbReference type="STRING" id="6239.Y73B6BL.30a.1"/>
<dbReference type="PaxDb" id="6239-Y73B6BL.30"/>
<dbReference type="PeptideAtlas" id="Q95XD3"/>
<dbReference type="EnsemblMetazoa" id="Y73B6BL.30a.1">
    <property type="protein sequence ID" value="Y73B6BL.30a.1"/>
    <property type="gene ID" value="WBGene00022251"/>
</dbReference>
<dbReference type="GeneID" id="177395"/>
<dbReference type="KEGG" id="cel:CELE_Y73B6BL.30"/>
<dbReference type="UCSC" id="Y73B6BL.30">
    <property type="organism name" value="c. elegans"/>
</dbReference>
<dbReference type="AGR" id="WB:WBGene00022251"/>
<dbReference type="CTD" id="177395"/>
<dbReference type="WormBase" id="Y73B6BL.30a">
    <property type="protein sequence ID" value="CE29005"/>
    <property type="gene ID" value="WBGene00022251"/>
    <property type="gene designation" value="blos-2"/>
</dbReference>
<dbReference type="eggNOG" id="KOG4559">
    <property type="taxonomic scope" value="Eukaryota"/>
</dbReference>
<dbReference type="HOGENOM" id="CLU_110820_2_0_1"/>
<dbReference type="InParanoid" id="Q95XD3"/>
<dbReference type="OMA" id="PMMQQID"/>
<dbReference type="OrthoDB" id="244061at2759"/>
<dbReference type="PhylomeDB" id="Q95XD3"/>
<dbReference type="PRO" id="PR:Q95XD3"/>
<dbReference type="Proteomes" id="UP000001940">
    <property type="component" value="Chromosome IV"/>
</dbReference>
<dbReference type="Bgee" id="WBGene00022251">
    <property type="expression patterns" value="Expressed in embryo and 3 other cell types or tissues"/>
</dbReference>
<dbReference type="ExpressionAtlas" id="Q95XD3">
    <property type="expression patterns" value="baseline and differential"/>
</dbReference>
<dbReference type="GO" id="GO:0031082">
    <property type="term" value="C:BLOC complex"/>
    <property type="evidence" value="ECO:0000303"/>
    <property type="project" value="ComplexPortal"/>
</dbReference>
<dbReference type="GO" id="GO:0031083">
    <property type="term" value="C:BLOC-1 complex"/>
    <property type="evidence" value="ECO:0000318"/>
    <property type="project" value="GO_Central"/>
</dbReference>
<dbReference type="GO" id="GO:0099078">
    <property type="term" value="C:BORC complex"/>
    <property type="evidence" value="ECO:0000318"/>
    <property type="project" value="GO_Central"/>
</dbReference>
<dbReference type="GO" id="GO:0000930">
    <property type="term" value="C:gamma-tubulin complex"/>
    <property type="evidence" value="ECO:0000318"/>
    <property type="project" value="GO_Central"/>
</dbReference>
<dbReference type="GO" id="GO:0043015">
    <property type="term" value="F:gamma-tubulin binding"/>
    <property type="evidence" value="ECO:0000318"/>
    <property type="project" value="GO_Central"/>
</dbReference>
<dbReference type="GO" id="GO:0016197">
    <property type="term" value="P:endosomal transport"/>
    <property type="evidence" value="ECO:0000315"/>
    <property type="project" value="UniProtKB"/>
</dbReference>
<dbReference type="GO" id="GO:0032418">
    <property type="term" value="P:lysosome localization"/>
    <property type="evidence" value="ECO:0000318"/>
    <property type="project" value="GO_Central"/>
</dbReference>
<dbReference type="GO" id="GO:1904757">
    <property type="term" value="P:positive regulation of gut granule assembly"/>
    <property type="evidence" value="ECO:0000303"/>
    <property type="project" value="ComplexPortal"/>
</dbReference>
<dbReference type="InterPro" id="IPR019269">
    <property type="entry name" value="BLOC1_su2"/>
</dbReference>
<dbReference type="PANTHER" id="PTHR46479">
    <property type="entry name" value="BIOGENESIS OF LYSOSOME-RELATED ORGANELLES COMPLEX 1 SUBUNIT 2"/>
    <property type="match status" value="1"/>
</dbReference>
<dbReference type="PANTHER" id="PTHR46479:SF1">
    <property type="entry name" value="BIOGENESIS OF LYSOSOME-RELATED ORGANELLES COMPLEX 1 SUBUNIT 2"/>
    <property type="match status" value="1"/>
</dbReference>
<dbReference type="Pfam" id="PF10046">
    <property type="entry name" value="BLOC1_2"/>
    <property type="match status" value="1"/>
</dbReference>
<accession>Q95XD3</accession>
<comment type="function">
    <text evidence="2">Component of the biogenesis of lysosome-related organelles complex-1 (BLOC-1) involved in gut granule biogenesis.</text>
</comment>
<comment type="subunit">
    <text evidence="2">Component of the biogenesis of lysosome-related organelles complex-1 (BLOC-1) composed at least of blos-1, blos-2, blos-4, dsbn-1, glo-2, mutd-1 and snpn-1.</text>
</comment>
<comment type="similarity">
    <text evidence="3">Belongs to the BLOC1S2 family.</text>
</comment>
<feature type="chain" id="PRO_0000420194" description="Biogenesis of lysosome-related organelles complex 1 subunit 2">
    <location>
        <begin position="1"/>
        <end position="132"/>
    </location>
</feature>
<feature type="region of interest" description="Disordered" evidence="1">
    <location>
        <begin position="1"/>
        <end position="24"/>
    </location>
</feature>
<feature type="compositionally biased region" description="Pro residues" evidence="1">
    <location>
        <begin position="13"/>
        <end position="22"/>
    </location>
</feature>
<evidence type="ECO:0000256" key="1">
    <source>
        <dbReference type="SAM" id="MobiDB-lite"/>
    </source>
</evidence>
<evidence type="ECO:0000269" key="2">
    <source>
    </source>
</evidence>
<evidence type="ECO:0000305" key="3"/>